<keyword id="KW-0067">ATP-binding</keyword>
<keyword id="KW-1003">Cell membrane</keyword>
<keyword id="KW-0472">Membrane</keyword>
<keyword id="KW-0547">Nucleotide-binding</keyword>
<keyword id="KW-1278">Translocase</keyword>
<keyword id="KW-0813">Transport</keyword>
<name>Y583_METTM</name>
<reference key="1">
    <citation type="journal article" date="1997" name="J. Bacteriol.">
        <title>Biosynthesis of riboflavin: an unusual riboflavin synthase of Methanobacterium thermoautotrophicum.</title>
        <authorList>
            <person name="Eberhardt S."/>
            <person name="Korn S."/>
            <person name="Lottspeich F."/>
            <person name="Bacher A."/>
        </authorList>
    </citation>
    <scope>NUCLEOTIDE SEQUENCE [GENOMIC DNA]</scope>
    <source>
        <strain>ATCC BAA-927 / DSM 2133 / JCM 14651 / NBRC 100331 / OCM 82 / Marburg</strain>
    </source>
</reference>
<reference key="2">
    <citation type="journal article" date="2010" name="J. Bacteriol.">
        <title>Complete genome sequence of Methanothermobacter marburgensis, a methanoarchaeon model organism.</title>
        <authorList>
            <person name="Liesegang H."/>
            <person name="Kaster A.K."/>
            <person name="Wiezer A."/>
            <person name="Goenrich M."/>
            <person name="Wollherr A."/>
            <person name="Seedorf H."/>
            <person name="Gottschalk G."/>
            <person name="Thauer R.K."/>
        </authorList>
    </citation>
    <scope>NUCLEOTIDE SEQUENCE [LARGE SCALE GENOMIC DNA]</scope>
    <source>
        <strain>ATCC BAA-927 / DSM 2133 / JCM 14651 / NBRC 100331 / OCM 82 / Marburg</strain>
    </source>
</reference>
<dbReference type="EC" id="7.-.-.-"/>
<dbReference type="EMBL" id="X94292">
    <property type="protein sequence ID" value="CAA63958.1"/>
    <property type="molecule type" value="Genomic_DNA"/>
</dbReference>
<dbReference type="EMBL" id="CP001710">
    <property type="protein sequence ID" value="ADL58178.1"/>
    <property type="molecule type" value="Genomic_DNA"/>
</dbReference>
<dbReference type="PIR" id="T45265">
    <property type="entry name" value="T45265"/>
</dbReference>
<dbReference type="RefSeq" id="WP_013295402.1">
    <property type="nucleotide sequence ID" value="NC_014408.1"/>
</dbReference>
<dbReference type="SMR" id="Q50801"/>
<dbReference type="STRING" id="79929.MTBMA_c05830"/>
<dbReference type="PaxDb" id="79929-MTBMA_c05830"/>
<dbReference type="GeneID" id="77399364"/>
<dbReference type="GeneID" id="9704291"/>
<dbReference type="KEGG" id="mmg:MTBMA_c05830"/>
<dbReference type="PATRIC" id="fig|79929.8.peg.567"/>
<dbReference type="HOGENOM" id="CLU_000604_1_22_2"/>
<dbReference type="OrthoDB" id="18209at2157"/>
<dbReference type="Proteomes" id="UP000000345">
    <property type="component" value="Chromosome"/>
</dbReference>
<dbReference type="GO" id="GO:0043190">
    <property type="term" value="C:ATP-binding cassette (ABC) transporter complex"/>
    <property type="evidence" value="ECO:0007669"/>
    <property type="project" value="TreeGrafter"/>
</dbReference>
<dbReference type="GO" id="GO:0005524">
    <property type="term" value="F:ATP binding"/>
    <property type="evidence" value="ECO:0007669"/>
    <property type="project" value="UniProtKB-KW"/>
</dbReference>
<dbReference type="GO" id="GO:0016887">
    <property type="term" value="F:ATP hydrolysis activity"/>
    <property type="evidence" value="ECO:0007669"/>
    <property type="project" value="InterPro"/>
</dbReference>
<dbReference type="GO" id="GO:0042626">
    <property type="term" value="F:ATPase-coupled transmembrane transporter activity"/>
    <property type="evidence" value="ECO:0007669"/>
    <property type="project" value="TreeGrafter"/>
</dbReference>
<dbReference type="GO" id="GO:0006824">
    <property type="term" value="P:cobalt ion transport"/>
    <property type="evidence" value="ECO:0007669"/>
    <property type="project" value="InterPro"/>
</dbReference>
<dbReference type="CDD" id="cd03225">
    <property type="entry name" value="ABC_cobalt_CbiO_domain1"/>
    <property type="match status" value="1"/>
</dbReference>
<dbReference type="FunFam" id="3.40.50.300:FF:000224">
    <property type="entry name" value="Energy-coupling factor transporter ATP-binding protein EcfA"/>
    <property type="match status" value="1"/>
</dbReference>
<dbReference type="Gene3D" id="3.40.50.300">
    <property type="entry name" value="P-loop containing nucleotide triphosphate hydrolases"/>
    <property type="match status" value="1"/>
</dbReference>
<dbReference type="InterPro" id="IPR003593">
    <property type="entry name" value="AAA+_ATPase"/>
</dbReference>
<dbReference type="InterPro" id="IPR003439">
    <property type="entry name" value="ABC_transporter-like_ATP-bd"/>
</dbReference>
<dbReference type="InterPro" id="IPR017871">
    <property type="entry name" value="ABC_transporter-like_CS"/>
</dbReference>
<dbReference type="InterPro" id="IPR015856">
    <property type="entry name" value="ABC_transpr_CbiO/EcfA_su"/>
</dbReference>
<dbReference type="InterPro" id="IPR005876">
    <property type="entry name" value="Co_trans_ATP-bd"/>
</dbReference>
<dbReference type="InterPro" id="IPR050095">
    <property type="entry name" value="ECF_ABC_transporter_ATP-bd"/>
</dbReference>
<dbReference type="InterPro" id="IPR027417">
    <property type="entry name" value="P-loop_NTPase"/>
</dbReference>
<dbReference type="NCBIfam" id="TIGR01166">
    <property type="entry name" value="cbiO"/>
    <property type="match status" value="1"/>
</dbReference>
<dbReference type="PANTHER" id="PTHR43553:SF24">
    <property type="entry name" value="ENERGY-COUPLING FACTOR TRANSPORTER ATP-BINDING PROTEIN ECFA1"/>
    <property type="match status" value="1"/>
</dbReference>
<dbReference type="PANTHER" id="PTHR43553">
    <property type="entry name" value="HEAVY METAL TRANSPORTER"/>
    <property type="match status" value="1"/>
</dbReference>
<dbReference type="Pfam" id="PF00005">
    <property type="entry name" value="ABC_tran"/>
    <property type="match status" value="1"/>
</dbReference>
<dbReference type="SMART" id="SM00382">
    <property type="entry name" value="AAA"/>
    <property type="match status" value="1"/>
</dbReference>
<dbReference type="SUPFAM" id="SSF52540">
    <property type="entry name" value="P-loop containing nucleoside triphosphate hydrolases"/>
    <property type="match status" value="1"/>
</dbReference>
<dbReference type="PROSITE" id="PS00211">
    <property type="entry name" value="ABC_TRANSPORTER_1"/>
    <property type="match status" value="1"/>
</dbReference>
<dbReference type="PROSITE" id="PS50893">
    <property type="entry name" value="ABC_TRANSPORTER_2"/>
    <property type="match status" value="1"/>
</dbReference>
<dbReference type="PROSITE" id="PS51246">
    <property type="entry name" value="CBIO"/>
    <property type="match status" value="1"/>
</dbReference>
<gene>
    <name type="ordered locus">MTBMA_c05830</name>
</gene>
<proteinExistence type="inferred from homology"/>
<accession>Q50801</accession>
<accession>D9PVD0</accession>
<protein>
    <recommendedName>
        <fullName>Putative ABC transporter ATP-binding protein MTBMA_c05830</fullName>
        <ecNumber>7.-.-.-</ecNumber>
    </recommendedName>
</protein>
<organism>
    <name type="scientific">Methanothermobacter marburgensis (strain ATCC BAA-927 / DSM 2133 / JCM 14651 / NBRC 100331 / OCM 82 / Marburg)</name>
    <name type="common">Methanobacterium thermoautotrophicum</name>
    <dbReference type="NCBI Taxonomy" id="79929"/>
    <lineage>
        <taxon>Archaea</taxon>
        <taxon>Methanobacteriati</taxon>
        <taxon>Methanobacteriota</taxon>
        <taxon>Methanomada group</taxon>
        <taxon>Methanobacteria</taxon>
        <taxon>Methanobacteriales</taxon>
        <taxon>Methanobacteriaceae</taxon>
        <taxon>Methanothermobacter</taxon>
    </lineage>
</organism>
<comment type="function">
    <text evidence="1">Probably part of an ABC transporter complex. Responsible for energy coupling to the transport system (By similarity).</text>
</comment>
<comment type="subcellular location">
    <subcellularLocation>
        <location evidence="1">Cell membrane</location>
        <topology evidence="1">Peripheral membrane protein</topology>
    </subcellularLocation>
</comment>
<comment type="similarity">
    <text evidence="3">Belongs to the ABC transporter superfamily.</text>
</comment>
<evidence type="ECO:0000250" key="1"/>
<evidence type="ECO:0000255" key="2"/>
<evidence type="ECO:0000305" key="3"/>
<feature type="chain" id="PRO_0000092154" description="Putative ABC transporter ATP-binding protein MTBMA_c05830">
    <location>
        <begin position="1"/>
        <end position="278"/>
    </location>
</feature>
<feature type="domain" description="ABC transporter">
    <location>
        <begin position="4"/>
        <end position="239"/>
    </location>
</feature>
<feature type="binding site" evidence="2">
    <location>
        <begin position="37"/>
        <end position="44"/>
    </location>
    <ligand>
        <name>ATP</name>
        <dbReference type="ChEBI" id="CHEBI:30616"/>
    </ligand>
</feature>
<feature type="sequence conflict" description="In Ref. 1; CAA63958." evidence="3" ref="1">
    <original>YEDRP</original>
    <variation>TRTD</variation>
    <location>
        <begin position="132"/>
        <end position="136"/>
    </location>
</feature>
<sequence>MKIIEAVNIRYTYPDGTEALKGIDFHAKKGEVVALLGPNGAGKSTLFLHFNGILQPTSGKVLVDGKEIDYSKSGLIKVRQKVGIVFQNPDDQLFAPRVDEDVAFGPLNMGLDEDEVEERVKDALRKVGMSGYEDRPPHHLSGGEKKRVAIAGILAMKPDIMILDEPTSGLDPRGASQILRLLHELNEEGMTIIISTHDVDLAPLYSDRIYIISGGEIISEGTPGDVFSDIDTIRGADLRLPRIAHLVEILQKEDDLPFGEPYPLTIGEARRKLRDQLK</sequence>